<reference key="1">
    <citation type="journal article" date="2007" name="J. Gen. Virol.">
        <title>Sequence and organization of the Heliothis virescens ascovirus genome.</title>
        <authorList>
            <person name="Asgari S."/>
            <person name="Davis J."/>
            <person name="Wood D."/>
            <person name="Wilson P."/>
            <person name="McGrath A."/>
        </authorList>
    </citation>
    <scope>NUCLEOTIDE SEQUENCE [LARGE SCALE GENOMIC DNA]</scope>
</reference>
<name>Y146_HVAVE</name>
<proteinExistence type="inferred from homology"/>
<accession>A4KXK0</accession>
<feature type="chain" id="PRO_0000330596" description="Putative structural protein ORF146">
    <location>
        <begin position="1"/>
        <end position="1257"/>
    </location>
</feature>
<keyword id="KW-1185">Reference proteome</keyword>
<keyword id="KW-0946">Virion</keyword>
<organismHost>
    <name type="scientific">Noctuidae</name>
    <name type="common">owlet moths</name>
    <dbReference type="NCBI Taxonomy" id="7100"/>
</organismHost>
<comment type="subcellular location">
    <subcellularLocation>
        <location evidence="1">Virion</location>
    </subcellularLocation>
</comment>
<comment type="similarity">
    <text evidence="2">Belongs to the ascovirus HvAV ORF146 family.</text>
</comment>
<organism>
    <name type="scientific">Heliothis virescens ascovirus 3e</name>
    <name type="common">HvAV-3e</name>
    <dbReference type="NCBI Taxonomy" id="260797"/>
    <lineage>
        <taxon>Viruses</taxon>
        <taxon>Varidnaviria</taxon>
        <taxon>Bamfordvirae</taxon>
        <taxon>Nucleocytoviricota</taxon>
        <taxon>Megaviricetes</taxon>
        <taxon>Pimascovirales</taxon>
        <taxon>Ascoviridae</taxon>
        <taxon>Ascovirus</taxon>
        <taxon>Ascovirus TnAV2a</taxon>
    </lineage>
</organism>
<sequence length="1257" mass="143483">MNTSVLNVNGITFTIYDSYTPQVIYMIIADRLNTTTRMVWFPEFVSTVSDDAPRSGVHSAVDMYMYIRDMVSPSNADGPRSLSDAVQMVKSWVDRDPESNTKFVEHCIIDAYTSNREVNDDVDAQTCVLLDAIITQDVTGNDIHGPEYYREVVRSFRDRCMEHSRNIAANKRLVPMYVTMYSNWSNTTAPTMANMDVEAIRGKYTVYVPEPDERPTVILFNDLVMSEDLVVFAKYGEWLKYDARHPPTADTALSAMSRRTGTKVNNRERNHIALFMVRRGIYSPGMTYDIAHVYPAPGVGYTISVLSNNAPTVDVPRSITTAMGLGGDGIEVSDAGGGVTYTASFVLNDITFVTEYLQHFTLMKCTNKATCIFIDETHLMRHAKEWRRFTISSPRFIYEYNNYTVRFSVTVESTRRDVARVAPYSRIRIYDAPNTNVLYGIANDITSHMIQYKSEELDILKFYTEHLHTDELLNINVRVLRDSKRVKRTPGQLAGQHRQVRRRIQAQRDGDHVDVRSIINVNNYARQCAKLPTVVRSVDLVPDGKEHITFSPGRGLPDVYLYCNHDDAPYPGLAANRLAGNSDEHPFLPCCYRVRRNAAADACDNDSLAPEVRSQTFYNTQRVLPLTAFGKCPGNLEAMLAVQRYCRSTDTNSATFYPKEKVVQGATAVRGAVQVGPNAAIEAVMRAVHCLQSSTADPRSLVIGAEQLERERSKMMEYITCAGQELFDMSSGERLSWLKDNTSYFDPLRLVKLLQYHFDTNVFLYVRGSTVKPVRSIAKTESQRVRLKFYDDYTQAWNDNEDVLSIPYHYAGADYHDMKIHERSVVLYVHSGTEITTLAHPHVEYVLFENHCYITDTIRKTYQALLPQPMRAVYSFVYFDVDDATEEELDVDTANALRAIYYVSKGKQLSAHWRDVAVANSDKTAPRSQTIDGVGRLIGMDGVQLETIRSVEPLPSLPIDNHHHSMFSFHDNMNRRELLNPEHSAKCTYTWYLSKLTRVLLHLTAYTILKKGTLMSELFTVDERRFNLLHDTINSLFEAGVVDRASYMNLLIVEQDRVLTDSVDTARRLVYNASLLLRRMSAYETSEIRKSRYITELLRYETDFTSDESPFSIVTSIDKFILKPRPKTVSLFRPPLSLKHDDTNTVLVQYSVDKHYLSRRVDDAELMRLSDAMRSNTFKEISFDMFDTLYGNGDDADVRERERTSPTLILHVWRNETSSWTVLECTDDVDSEYAGVYFHLNAADPKDRITLKRLTLC</sequence>
<dbReference type="EMBL" id="EF133465">
    <property type="protein sequence ID" value="ABO37331.1"/>
    <property type="molecule type" value="Genomic_DNA"/>
</dbReference>
<dbReference type="RefSeq" id="YP_001110997.1">
    <property type="nucleotide sequence ID" value="NC_009233.1"/>
</dbReference>
<dbReference type="KEGG" id="vg:5076044"/>
<dbReference type="Proteomes" id="UP000001324">
    <property type="component" value="Genome"/>
</dbReference>
<dbReference type="GO" id="GO:0044423">
    <property type="term" value="C:virion component"/>
    <property type="evidence" value="ECO:0007669"/>
    <property type="project" value="UniProtKB-KW"/>
</dbReference>
<dbReference type="InterPro" id="IPR043920">
    <property type="entry name" value="DUF5757"/>
</dbReference>
<dbReference type="Pfam" id="PF19061">
    <property type="entry name" value="DUF5757"/>
    <property type="match status" value="1"/>
</dbReference>
<protein>
    <recommendedName>
        <fullName>Putative structural protein ORF146</fullName>
    </recommendedName>
</protein>
<gene>
    <name type="ORF">ORF146</name>
</gene>
<evidence type="ECO:0000250" key="1"/>
<evidence type="ECO:0000305" key="2"/>